<protein>
    <recommendedName>
        <fullName evidence="8">Toxin Aah4</fullName>
    </recommendedName>
    <alternativeName>
        <fullName evidence="5 6">AaH IV</fullName>
        <shortName evidence="7">AaHIV</shortName>
    </alternativeName>
    <alternativeName>
        <fullName evidence="8">Neurotoxin 4</fullName>
    </alternativeName>
    <alternativeName>
        <fullName evidence="6">Neurotoxin IV</fullName>
    </alternativeName>
</protein>
<comment type="function">
    <text evidence="3">Alpha toxins bind voltage-independently at site-3 of sodium channels (Nav) and inhibit the inactivation of the activated channels, thereby blocking neuronal transmission. This toxin seems to specifically act on Nav1.6/SCN8A sodium channel (PubMed:31668811). In vitro, it inhibits the proliferation of the prostate cancer cell line DU145 (IC(50)=15 uM). It shows low effect on the adhesion of DU145 cells to fibronectin (at 15 uM) and is inactive on DU145 cells migration (PubMed:31668811).</text>
</comment>
<comment type="subcellular location">
    <subcellularLocation>
        <location evidence="2">Secreted</location>
    </subcellularLocation>
</comment>
<comment type="tissue specificity">
    <text evidence="9">Expressed by the venom gland.</text>
</comment>
<comment type="domain">
    <text evidence="8">Has the structural arrangement of an alpha-helix connected to antiparallel beta-sheets by disulfide bonds (CS-alpha/beta).</text>
</comment>
<comment type="mass spectrometry" mass="6882.0" method="MALDI" evidence="3"/>
<comment type="toxic dose">
    <text evidence="4">LD(50) is 0.9 ug/kg by intracerebroventricular injection into mice.</text>
</comment>
<comment type="toxic dose">
    <text evidence="3">LD(50) is 0.75 ug/kg by intracerebroventricular injection into mice.</text>
</comment>
<comment type="miscellaneous">
    <text evidence="3">Negative results: does not show activity on Nav1.2/SCN2A, Nav1.4/SCN4A, Nav1.5/SCN5A, Nav1.7/SCN9A, Nav1.8/SCN10A (when tested at 5 uM).</text>
</comment>
<comment type="similarity">
    <text evidence="8">Belongs to the long (4 C-C) scorpion toxin superfamily. Sodium channel inhibitor family. Alpha subfamily.</text>
</comment>
<name>SCX4_ANDAU</name>
<feature type="signal peptide" evidence="2">
    <location>
        <begin position="1"/>
        <end position="19"/>
    </location>
</feature>
<feature type="chain" id="PRO_0000035223" description="Toxin Aah4" evidence="2">
    <location>
        <begin position="20"/>
        <end position="83"/>
    </location>
</feature>
<feature type="propeptide" id="PRO_0000035224" description="Removed by a carboxypeptidase">
    <location>
        <position position="84"/>
    </location>
</feature>
<feature type="domain" description="LCN-type CS-alpha/beta" evidence="1">
    <location>
        <begin position="21"/>
        <end position="82"/>
    </location>
</feature>
<feature type="disulfide bond" evidence="1">
    <location>
        <begin position="31"/>
        <end position="81"/>
    </location>
</feature>
<feature type="disulfide bond" evidence="1">
    <location>
        <begin position="35"/>
        <end position="53"/>
    </location>
</feature>
<feature type="disulfide bond" evidence="1">
    <location>
        <begin position="39"/>
        <end position="63"/>
    </location>
</feature>
<feature type="disulfide bond" evidence="1">
    <location>
        <begin position="43"/>
        <end position="65"/>
    </location>
</feature>
<organism>
    <name type="scientific">Androctonus australis</name>
    <name type="common">Sahara scorpion</name>
    <dbReference type="NCBI Taxonomy" id="6858"/>
    <lineage>
        <taxon>Eukaryota</taxon>
        <taxon>Metazoa</taxon>
        <taxon>Ecdysozoa</taxon>
        <taxon>Arthropoda</taxon>
        <taxon>Chelicerata</taxon>
        <taxon>Arachnida</taxon>
        <taxon>Scorpiones</taxon>
        <taxon>Buthida</taxon>
        <taxon>Buthoidea</taxon>
        <taxon>Buthidae</taxon>
        <taxon>Androctonus</taxon>
    </lineage>
</organism>
<reference key="1">
    <citation type="journal article" date="2001" name="FEBS Lett.">
        <title>Evidence for a position-specific deletion as an evolutionary link between long- and short-chain scorpion toxins.</title>
        <authorList>
            <person name="Ceard B."/>
            <person name="Martin-Eauclaire M.-F."/>
            <person name="Bougis P.E."/>
        </authorList>
    </citation>
    <scope>NUCLEOTIDE SEQUENCE [MRNA]</scope>
    <source>
        <strain>Hector</strain>
        <tissue>Venom gland</tissue>
    </source>
</reference>
<reference key="2">
    <citation type="journal article" date="1992" name="Nat. Toxins">
        <title>The amino acid sequence of toxin IV from the Androctonus australis scorpion: differing effects of natural mutations in scorpion alpha-toxins on their antigenic and toxic properties.</title>
        <authorList>
            <person name="Mansuelle P."/>
            <person name="Martin M.-F."/>
            <person name="Rochat H."/>
            <person name="Granier C."/>
        </authorList>
    </citation>
    <scope>PROTEIN SEQUENCE OF 20-83</scope>
    <scope>SUBCELLULAR LOCATION</scope>
    <source>
        <strain>Hector</strain>
        <tissue>Venom</tissue>
    </source>
</reference>
<reference key="3">
    <citation type="journal article" date="1986" name="Toxicon">
        <title>Large scale purification of toxins from the venom of the scorpion Androctonus australis Hector.</title>
        <authorList>
            <person name="Martin M.F."/>
            <person name="Rochat H."/>
        </authorList>
    </citation>
    <scope>PARTIAL PROTEIN SEQUENCE</scope>
    <scope>CHARACTERIZATION</scope>
    <scope>TOXIC DOSE</scope>
</reference>
<reference key="4">
    <citation type="journal article" date="2020" name="Biochem. Biophys. Res. Commun.">
        <title>AaHIV a sodium channel scorpion toxin inhibits the proliferation of DU145 prostate cancer cells.</title>
        <authorList>
            <person name="BenAissa R."/>
            <person name="Othman H."/>
            <person name="Villard C."/>
            <person name="Peigneur S."/>
            <person name="Mlayah-Bellalouna S."/>
            <person name="Abdelkafi-Koubaa Z."/>
            <person name="Marrakchi N."/>
            <person name="Essafi-Benkhadir K."/>
            <person name="Tytgat J."/>
            <person name="Luis J."/>
            <person name="Srairi-Abid N."/>
        </authorList>
    </citation>
    <scope>PROTEIN SEQUENCE OF 30-84</scope>
    <scope>FUNCTION</scope>
    <scope>MASS SPECTROMETRY</scope>
    <scope>3D-STRUCTURE MODELING ALONE AND IN COMPLEX WITH NAV1.2/SCN2A; NAV1.6/SCN8A AND NAV1.7/SNC9A</scope>
    <source>
        <tissue>Venom</tissue>
    </source>
</reference>
<sequence length="84" mass="9157">MNYLIMFSLALLLVIGVESGRDGYIVDSKNCVYHCYPPCDGLCKKNGAKSGSCGFLVPSGLACWCNDLPENVPIKDPSDDCHKR</sequence>
<dbReference type="EMBL" id="AJ308439">
    <property type="protein sequence ID" value="CAC37320.1"/>
    <property type="molecule type" value="mRNA"/>
</dbReference>
<dbReference type="PIR" id="JC1321">
    <property type="entry name" value="JC1321"/>
</dbReference>
<dbReference type="SMR" id="P45658"/>
<dbReference type="GO" id="GO:0005576">
    <property type="term" value="C:extracellular region"/>
    <property type="evidence" value="ECO:0007669"/>
    <property type="project" value="UniProtKB-SubCell"/>
</dbReference>
<dbReference type="GO" id="GO:0019871">
    <property type="term" value="F:sodium channel inhibitor activity"/>
    <property type="evidence" value="ECO:0007669"/>
    <property type="project" value="InterPro"/>
</dbReference>
<dbReference type="GO" id="GO:0090729">
    <property type="term" value="F:toxin activity"/>
    <property type="evidence" value="ECO:0007669"/>
    <property type="project" value="UniProtKB-KW"/>
</dbReference>
<dbReference type="GO" id="GO:0006952">
    <property type="term" value="P:defense response"/>
    <property type="evidence" value="ECO:0007669"/>
    <property type="project" value="InterPro"/>
</dbReference>
<dbReference type="CDD" id="cd23106">
    <property type="entry name" value="neurotoxins_LC_scorpion"/>
    <property type="match status" value="1"/>
</dbReference>
<dbReference type="Gene3D" id="3.30.30.10">
    <property type="entry name" value="Knottin, scorpion toxin-like"/>
    <property type="match status" value="1"/>
</dbReference>
<dbReference type="InterPro" id="IPR044062">
    <property type="entry name" value="LCN-type_CS_alpha_beta_dom"/>
</dbReference>
<dbReference type="InterPro" id="IPR003614">
    <property type="entry name" value="Scorpion_toxin-like"/>
</dbReference>
<dbReference type="InterPro" id="IPR036574">
    <property type="entry name" value="Scorpion_toxin-like_sf"/>
</dbReference>
<dbReference type="InterPro" id="IPR002061">
    <property type="entry name" value="Scorpion_toxinL/defensin"/>
</dbReference>
<dbReference type="Pfam" id="PF00537">
    <property type="entry name" value="Toxin_3"/>
    <property type="match status" value="1"/>
</dbReference>
<dbReference type="SMART" id="SM00505">
    <property type="entry name" value="Knot1"/>
    <property type="match status" value="1"/>
</dbReference>
<dbReference type="SUPFAM" id="SSF57095">
    <property type="entry name" value="Scorpion toxin-like"/>
    <property type="match status" value="1"/>
</dbReference>
<dbReference type="PROSITE" id="PS51863">
    <property type="entry name" value="LCN_CSAB"/>
    <property type="match status" value="1"/>
</dbReference>
<proteinExistence type="evidence at protein level"/>
<accession>P45658</accession>
<accession>Q9BLM5</accession>
<evidence type="ECO:0000255" key="1">
    <source>
        <dbReference type="PROSITE-ProRule" id="PRU01210"/>
    </source>
</evidence>
<evidence type="ECO:0000269" key="2">
    <source>
    </source>
</evidence>
<evidence type="ECO:0000269" key="3">
    <source>
    </source>
</evidence>
<evidence type="ECO:0000269" key="4">
    <source>
    </source>
</evidence>
<evidence type="ECO:0000303" key="5">
    <source>
    </source>
</evidence>
<evidence type="ECO:0000303" key="6">
    <source>
    </source>
</evidence>
<evidence type="ECO:0000303" key="7">
    <source>
    </source>
</evidence>
<evidence type="ECO:0000305" key="8"/>
<evidence type="ECO:0000305" key="9">
    <source>
    </source>
</evidence>
<keyword id="KW-0903">Direct protein sequencing</keyword>
<keyword id="KW-1015">Disulfide bond</keyword>
<keyword id="KW-0872">Ion channel impairing toxin</keyword>
<keyword id="KW-0528">Neurotoxin</keyword>
<keyword id="KW-0964">Secreted</keyword>
<keyword id="KW-0732">Signal</keyword>
<keyword id="KW-0800">Toxin</keyword>
<keyword id="KW-0738">Voltage-gated sodium channel impairing toxin</keyword>